<gene>
    <name type="primary">petB</name>
    <name type="synonym">cytB</name>
    <name type="ordered locus">RT0262</name>
</gene>
<accession>Q68X99</accession>
<sequence>MNKEMTHKKSNGIIEWIDYRLPIFSFFKHFSYYQTPKNLNYLWTLGSIAGIALVIQIITGVILAMHYTPHVDHAFESVERIMRNVNYGWLLRYTHTVGASMFFATIYLHIARGLYYGSYKTPRELLWHIGIIIFLIMMATAFMGYVLPWGQMSYWSATVITNLFSAIPLIGEPIVIWLCGGFSVDNPTLNRFFSLHYLFPFIIVALVILHLLALHQHGSNNPKGIDVKSTKDTIPFHPYYTVKDFVGFGVYFIIFAYFIFYEPNYLGHPDNYIPANPLVTPAHIVPEWYFRPFYAILRAVPSKLAGVFLMFGSIFVLFLLPWLDTSKIRSGNYRPIYRIAFWIFMADCLFLGYLGSKPPAEPYIIISRFSACYYFCHFLVVLPLIGKYEKPLPLPNEL</sequence>
<comment type="function">
    <text evidence="1">Component of the ubiquinol-cytochrome c reductase complex (complex III or cytochrome b-c1 complex), which is a respiratory chain that generates an electrochemical potential coupled to ATP synthesis.</text>
</comment>
<comment type="cofactor">
    <cofactor evidence="1">
        <name>heme b</name>
        <dbReference type="ChEBI" id="CHEBI:60344"/>
    </cofactor>
    <text evidence="1">Binds 2 heme b groups non-covalently.</text>
</comment>
<comment type="subunit">
    <text evidence="1">The main subunits of complex b-c1 are: cytochrome b, cytochrome c1 and the Rieske protein.</text>
</comment>
<comment type="subcellular location">
    <subcellularLocation>
        <location evidence="5">Cell membrane</location>
        <topology evidence="5">Multi-pass membrane protein</topology>
    </subcellularLocation>
</comment>
<comment type="miscellaneous">
    <text evidence="1">Heme 1 (or BL or b562) is low-potential and absorbs at about 562 nm, and heme 2 (or BH or b566) is high-potential and absorbs at about 566 nm.</text>
</comment>
<comment type="similarity">
    <text evidence="3 4">Belongs to the cytochrome b family.</text>
</comment>
<protein>
    <recommendedName>
        <fullName>Cytochrome b</fullName>
    </recommendedName>
</protein>
<proteinExistence type="inferred from homology"/>
<feature type="chain" id="PRO_0000280936" description="Cytochrome b">
    <location>
        <begin position="1"/>
        <end position="398"/>
    </location>
</feature>
<feature type="transmembrane region" description="Helical" evidence="2">
    <location>
        <begin position="45"/>
        <end position="65"/>
    </location>
</feature>
<feature type="transmembrane region" description="Helical" evidence="2">
    <location>
        <begin position="97"/>
        <end position="117"/>
    </location>
</feature>
<feature type="transmembrane region" description="Helical" evidence="2">
    <location>
        <begin position="129"/>
        <end position="149"/>
    </location>
</feature>
<feature type="transmembrane region" description="Helical" evidence="2">
    <location>
        <begin position="164"/>
        <end position="184"/>
    </location>
</feature>
<feature type="transmembrane region" description="Helical" evidence="2">
    <location>
        <begin position="192"/>
        <end position="212"/>
    </location>
</feature>
<feature type="transmembrane region" description="Helical" evidence="2">
    <location>
        <begin position="245"/>
        <end position="265"/>
    </location>
</feature>
<feature type="transmembrane region" description="Helical" evidence="2">
    <location>
        <begin position="304"/>
        <end position="324"/>
    </location>
</feature>
<feature type="transmembrane region" description="Helical" evidence="2">
    <location>
        <begin position="335"/>
        <end position="355"/>
    </location>
</feature>
<feature type="transmembrane region" description="Helical" evidence="2">
    <location>
        <begin position="364"/>
        <end position="384"/>
    </location>
</feature>
<feature type="binding site" description="axial binding residue">
    <location>
        <position position="95"/>
    </location>
    <ligand>
        <name>heme b</name>
        <dbReference type="ChEBI" id="CHEBI:60344"/>
        <label>b562</label>
    </ligand>
    <ligandPart>
        <name>Fe</name>
        <dbReference type="ChEBI" id="CHEBI:18248"/>
    </ligandPart>
</feature>
<feature type="binding site" description="axial binding residue">
    <location>
        <position position="109"/>
    </location>
    <ligand>
        <name>heme b</name>
        <dbReference type="ChEBI" id="CHEBI:60344"/>
        <label>b566</label>
    </ligand>
    <ligandPart>
        <name>Fe</name>
        <dbReference type="ChEBI" id="CHEBI:18248"/>
    </ligandPart>
</feature>
<feature type="binding site" description="axial binding residue">
    <location>
        <position position="196"/>
    </location>
    <ligand>
        <name>heme b</name>
        <dbReference type="ChEBI" id="CHEBI:60344"/>
        <label>b562</label>
    </ligand>
    <ligandPart>
        <name>Fe</name>
        <dbReference type="ChEBI" id="CHEBI:18248"/>
    </ligandPart>
</feature>
<feature type="binding site" description="axial binding residue">
    <location>
        <position position="210"/>
    </location>
    <ligand>
        <name>heme b</name>
        <dbReference type="ChEBI" id="CHEBI:60344"/>
        <label>b566</label>
    </ligand>
    <ligandPart>
        <name>Fe</name>
        <dbReference type="ChEBI" id="CHEBI:18248"/>
    </ligandPart>
</feature>
<evidence type="ECO:0000250" key="1"/>
<evidence type="ECO:0000255" key="2"/>
<evidence type="ECO:0000255" key="3">
    <source>
        <dbReference type="PROSITE-ProRule" id="PRU00967"/>
    </source>
</evidence>
<evidence type="ECO:0000255" key="4">
    <source>
        <dbReference type="PROSITE-ProRule" id="PRU00968"/>
    </source>
</evidence>
<evidence type="ECO:0000305" key="5"/>
<keyword id="KW-1003">Cell membrane</keyword>
<keyword id="KW-0249">Electron transport</keyword>
<keyword id="KW-0349">Heme</keyword>
<keyword id="KW-0408">Iron</keyword>
<keyword id="KW-0472">Membrane</keyword>
<keyword id="KW-0479">Metal-binding</keyword>
<keyword id="KW-0679">Respiratory chain</keyword>
<keyword id="KW-0812">Transmembrane</keyword>
<keyword id="KW-1133">Transmembrane helix</keyword>
<keyword id="KW-0813">Transport</keyword>
<dbReference type="EMBL" id="AE017197">
    <property type="protein sequence ID" value="AAU03743.1"/>
    <property type="molecule type" value="Genomic_DNA"/>
</dbReference>
<dbReference type="RefSeq" id="WP_011190728.1">
    <property type="nucleotide sequence ID" value="NC_006142.1"/>
</dbReference>
<dbReference type="SMR" id="Q68X99"/>
<dbReference type="KEGG" id="rty:RT0262"/>
<dbReference type="eggNOG" id="COG1290">
    <property type="taxonomic scope" value="Bacteria"/>
</dbReference>
<dbReference type="HOGENOM" id="CLU_031114_3_0_5"/>
<dbReference type="OrthoDB" id="9804503at2"/>
<dbReference type="Proteomes" id="UP000000604">
    <property type="component" value="Chromosome"/>
</dbReference>
<dbReference type="GO" id="GO:0005886">
    <property type="term" value="C:plasma membrane"/>
    <property type="evidence" value="ECO:0007669"/>
    <property type="project" value="UniProtKB-SubCell"/>
</dbReference>
<dbReference type="GO" id="GO:0045275">
    <property type="term" value="C:respiratory chain complex III"/>
    <property type="evidence" value="ECO:0007669"/>
    <property type="project" value="InterPro"/>
</dbReference>
<dbReference type="GO" id="GO:0046872">
    <property type="term" value="F:metal ion binding"/>
    <property type="evidence" value="ECO:0007669"/>
    <property type="project" value="UniProtKB-KW"/>
</dbReference>
<dbReference type="GO" id="GO:0008121">
    <property type="term" value="F:ubiquinol-cytochrome-c reductase activity"/>
    <property type="evidence" value="ECO:0007669"/>
    <property type="project" value="InterPro"/>
</dbReference>
<dbReference type="GO" id="GO:0022904">
    <property type="term" value="P:respiratory electron transport chain"/>
    <property type="evidence" value="ECO:0007669"/>
    <property type="project" value="InterPro"/>
</dbReference>
<dbReference type="CDD" id="cd00290">
    <property type="entry name" value="cytochrome_b_C"/>
    <property type="match status" value="1"/>
</dbReference>
<dbReference type="CDD" id="cd00284">
    <property type="entry name" value="Cytochrome_b_N"/>
    <property type="match status" value="1"/>
</dbReference>
<dbReference type="FunFam" id="1.20.810.10:FF:000004">
    <property type="entry name" value="Cytochrome b"/>
    <property type="match status" value="1"/>
</dbReference>
<dbReference type="Gene3D" id="1.20.810.10">
    <property type="entry name" value="Cytochrome Bc1 Complex, Chain C"/>
    <property type="match status" value="1"/>
</dbReference>
<dbReference type="InterPro" id="IPR005798">
    <property type="entry name" value="Cyt_b/b6_C"/>
</dbReference>
<dbReference type="InterPro" id="IPR036150">
    <property type="entry name" value="Cyt_b/b6_C_sf"/>
</dbReference>
<dbReference type="InterPro" id="IPR005797">
    <property type="entry name" value="Cyt_b/b6_N"/>
</dbReference>
<dbReference type="InterPro" id="IPR027387">
    <property type="entry name" value="Cytb/b6-like_sf"/>
</dbReference>
<dbReference type="InterPro" id="IPR030689">
    <property type="entry name" value="Cytochrome_b"/>
</dbReference>
<dbReference type="InterPro" id="IPR048260">
    <property type="entry name" value="Cytochrome_b_C_euk/bac"/>
</dbReference>
<dbReference type="InterPro" id="IPR048259">
    <property type="entry name" value="Cytochrome_b_N_euk/bac"/>
</dbReference>
<dbReference type="InterPro" id="IPR016174">
    <property type="entry name" value="Di-haem_cyt_TM"/>
</dbReference>
<dbReference type="PANTHER" id="PTHR19271">
    <property type="entry name" value="CYTOCHROME B"/>
    <property type="match status" value="1"/>
</dbReference>
<dbReference type="PANTHER" id="PTHR19271:SF16">
    <property type="entry name" value="CYTOCHROME B"/>
    <property type="match status" value="1"/>
</dbReference>
<dbReference type="Pfam" id="PF00032">
    <property type="entry name" value="Cytochrom_B_C"/>
    <property type="match status" value="1"/>
</dbReference>
<dbReference type="Pfam" id="PF00033">
    <property type="entry name" value="Cytochrome_B"/>
    <property type="match status" value="1"/>
</dbReference>
<dbReference type="PIRSF" id="PIRSF038885">
    <property type="entry name" value="COB"/>
    <property type="match status" value="1"/>
</dbReference>
<dbReference type="SUPFAM" id="SSF81648">
    <property type="entry name" value="a domain/subunit of cytochrome bc1 complex (Ubiquinol-cytochrome c reductase)"/>
    <property type="match status" value="1"/>
</dbReference>
<dbReference type="SUPFAM" id="SSF81342">
    <property type="entry name" value="Transmembrane di-heme cytochromes"/>
    <property type="match status" value="1"/>
</dbReference>
<dbReference type="PROSITE" id="PS51003">
    <property type="entry name" value="CYTB_CTER"/>
    <property type="match status" value="1"/>
</dbReference>
<dbReference type="PROSITE" id="PS51002">
    <property type="entry name" value="CYTB_NTER"/>
    <property type="match status" value="1"/>
</dbReference>
<name>CYB_RICTY</name>
<organism>
    <name type="scientific">Rickettsia typhi (strain ATCC VR-144 / Wilmington)</name>
    <dbReference type="NCBI Taxonomy" id="257363"/>
    <lineage>
        <taxon>Bacteria</taxon>
        <taxon>Pseudomonadati</taxon>
        <taxon>Pseudomonadota</taxon>
        <taxon>Alphaproteobacteria</taxon>
        <taxon>Rickettsiales</taxon>
        <taxon>Rickettsiaceae</taxon>
        <taxon>Rickettsieae</taxon>
        <taxon>Rickettsia</taxon>
        <taxon>typhus group</taxon>
    </lineage>
</organism>
<reference key="1">
    <citation type="journal article" date="2004" name="J. Bacteriol.">
        <title>Complete genome sequence of Rickettsia typhi and comparison with sequences of other Rickettsiae.</title>
        <authorList>
            <person name="McLeod M.P."/>
            <person name="Qin X."/>
            <person name="Karpathy S.E."/>
            <person name="Gioia J."/>
            <person name="Highlander S.K."/>
            <person name="Fox G.E."/>
            <person name="McNeill T.Z."/>
            <person name="Jiang H."/>
            <person name="Muzny D."/>
            <person name="Jacob L.S."/>
            <person name="Hawes A.C."/>
            <person name="Sodergren E."/>
            <person name="Gill R."/>
            <person name="Hume J."/>
            <person name="Morgan M."/>
            <person name="Fan G."/>
            <person name="Amin A.G."/>
            <person name="Gibbs R.A."/>
            <person name="Hong C."/>
            <person name="Yu X.-J."/>
            <person name="Walker D.H."/>
            <person name="Weinstock G.M."/>
        </authorList>
    </citation>
    <scope>NUCLEOTIDE SEQUENCE [LARGE SCALE GENOMIC DNA]</scope>
    <source>
        <strain>ATCC VR-144 / Wilmington</strain>
    </source>
</reference>